<organism>
    <name type="scientific">Mus pahari</name>
    <name type="common">Gairdner's shrew-mouse</name>
    <name type="synonym">Coelomys pahari</name>
    <dbReference type="NCBI Taxonomy" id="10093"/>
    <lineage>
        <taxon>Eukaryota</taxon>
        <taxon>Metazoa</taxon>
        <taxon>Chordata</taxon>
        <taxon>Craniata</taxon>
        <taxon>Vertebrata</taxon>
        <taxon>Euteleostomi</taxon>
        <taxon>Mammalia</taxon>
        <taxon>Eutheria</taxon>
        <taxon>Euarchontoglires</taxon>
        <taxon>Glires</taxon>
        <taxon>Rodentia</taxon>
        <taxon>Myomorpha</taxon>
        <taxon>Muroidea</taxon>
        <taxon>Muridae</taxon>
        <taxon>Murinae</taxon>
        <taxon>Mus</taxon>
        <taxon>Coelomys</taxon>
    </lineage>
</organism>
<keyword id="KW-0153">Cholesterol metabolism</keyword>
<keyword id="KW-0325">Glycoprotein</keyword>
<keyword id="KW-0345">HDL</keyword>
<keyword id="KW-0443">Lipid metabolism</keyword>
<keyword id="KW-0445">Lipid transport</keyword>
<keyword id="KW-0449">Lipoprotein</keyword>
<keyword id="KW-0558">Oxidation</keyword>
<keyword id="KW-0564">Palmitate</keyword>
<keyword id="KW-0597">Phosphoprotein</keyword>
<keyword id="KW-0677">Repeat</keyword>
<keyword id="KW-0964">Secreted</keyword>
<keyword id="KW-0732">Signal</keyword>
<keyword id="KW-0753">Steroid metabolism</keyword>
<keyword id="KW-1207">Sterol metabolism</keyword>
<keyword id="KW-0813">Transport</keyword>
<dbReference type="EMBL" id="FMBV02003121">
    <property type="status" value="NOT_ANNOTATED_CDS"/>
    <property type="molecule type" value="Genomic_DNA"/>
</dbReference>
<dbReference type="RefSeq" id="XP_021063777.1">
    <property type="nucleotide sequence ID" value="XM_021208118.1"/>
</dbReference>
<dbReference type="SMR" id="P0DTV0"/>
<dbReference type="GeneID" id="110328699"/>
<dbReference type="GO" id="GO:0042627">
    <property type="term" value="C:chylomicron"/>
    <property type="evidence" value="ECO:0007669"/>
    <property type="project" value="TreeGrafter"/>
</dbReference>
<dbReference type="GO" id="GO:0030139">
    <property type="term" value="C:endocytic vesicle"/>
    <property type="evidence" value="ECO:0007669"/>
    <property type="project" value="Ensembl"/>
</dbReference>
<dbReference type="GO" id="GO:1903561">
    <property type="term" value="C:extracellular vesicle"/>
    <property type="evidence" value="ECO:0007669"/>
    <property type="project" value="TreeGrafter"/>
</dbReference>
<dbReference type="GO" id="GO:0034362">
    <property type="term" value="C:low-density lipoprotein particle"/>
    <property type="evidence" value="ECO:0007669"/>
    <property type="project" value="TreeGrafter"/>
</dbReference>
<dbReference type="GO" id="GO:0034366">
    <property type="term" value="C:spherical high-density lipoprotein particle"/>
    <property type="evidence" value="ECO:0007669"/>
    <property type="project" value="Ensembl"/>
</dbReference>
<dbReference type="GO" id="GO:0034361">
    <property type="term" value="C:very-low-density lipoprotein particle"/>
    <property type="evidence" value="ECO:0007669"/>
    <property type="project" value="Ensembl"/>
</dbReference>
<dbReference type="GO" id="GO:0001540">
    <property type="term" value="F:amyloid-beta binding"/>
    <property type="evidence" value="ECO:0007669"/>
    <property type="project" value="Ensembl"/>
</dbReference>
<dbReference type="GO" id="GO:0034191">
    <property type="term" value="F:apolipoprotein A-I receptor binding"/>
    <property type="evidence" value="ECO:0007669"/>
    <property type="project" value="Ensembl"/>
</dbReference>
<dbReference type="GO" id="GO:0045499">
    <property type="term" value="F:chemorepellent activity"/>
    <property type="evidence" value="ECO:0007669"/>
    <property type="project" value="Ensembl"/>
</dbReference>
<dbReference type="GO" id="GO:0015485">
    <property type="term" value="F:cholesterol binding"/>
    <property type="evidence" value="ECO:0007669"/>
    <property type="project" value="Ensembl"/>
</dbReference>
<dbReference type="GO" id="GO:0120020">
    <property type="term" value="F:cholesterol transfer activity"/>
    <property type="evidence" value="ECO:0007669"/>
    <property type="project" value="Ensembl"/>
</dbReference>
<dbReference type="GO" id="GO:0019899">
    <property type="term" value="F:enzyme binding"/>
    <property type="evidence" value="ECO:0007669"/>
    <property type="project" value="Ensembl"/>
</dbReference>
<dbReference type="GO" id="GO:0031072">
    <property type="term" value="F:heat shock protein binding"/>
    <property type="evidence" value="ECO:0007669"/>
    <property type="project" value="Ensembl"/>
</dbReference>
<dbReference type="GO" id="GO:0008035">
    <property type="term" value="F:high-density lipoprotein particle binding"/>
    <property type="evidence" value="ECO:0007669"/>
    <property type="project" value="Ensembl"/>
</dbReference>
<dbReference type="GO" id="GO:0070653">
    <property type="term" value="F:high-density lipoprotein particle receptor binding"/>
    <property type="evidence" value="ECO:0007669"/>
    <property type="project" value="Ensembl"/>
</dbReference>
<dbReference type="GO" id="GO:0060228">
    <property type="term" value="F:phosphatidylcholine-sterol O-acyltransferase activator activity"/>
    <property type="evidence" value="ECO:0007669"/>
    <property type="project" value="Ensembl"/>
</dbReference>
<dbReference type="GO" id="GO:0005543">
    <property type="term" value="F:phospholipid binding"/>
    <property type="evidence" value="ECO:0007669"/>
    <property type="project" value="Ensembl"/>
</dbReference>
<dbReference type="GO" id="GO:0042803">
    <property type="term" value="F:protein homodimerization activity"/>
    <property type="evidence" value="ECO:0000250"/>
    <property type="project" value="UniProtKB"/>
</dbReference>
<dbReference type="GO" id="GO:0030325">
    <property type="term" value="P:adrenal gland development"/>
    <property type="evidence" value="ECO:0007669"/>
    <property type="project" value="Ensembl"/>
</dbReference>
<dbReference type="GO" id="GO:0034205">
    <property type="term" value="P:amyloid-beta formation"/>
    <property type="evidence" value="ECO:0007669"/>
    <property type="project" value="Ensembl"/>
</dbReference>
<dbReference type="GO" id="GO:0043534">
    <property type="term" value="P:blood vessel endothelial cell migration"/>
    <property type="evidence" value="ECO:0007669"/>
    <property type="project" value="Ensembl"/>
</dbReference>
<dbReference type="GO" id="GO:0071402">
    <property type="term" value="P:cellular response to lipoprotein particle stimulus"/>
    <property type="evidence" value="ECO:0007669"/>
    <property type="project" value="Ensembl"/>
</dbReference>
<dbReference type="GO" id="GO:0006695">
    <property type="term" value="P:cholesterol biosynthetic process"/>
    <property type="evidence" value="ECO:0007669"/>
    <property type="project" value="Ensembl"/>
</dbReference>
<dbReference type="GO" id="GO:0033344">
    <property type="term" value="P:cholesterol efflux"/>
    <property type="evidence" value="ECO:0007669"/>
    <property type="project" value="Ensembl"/>
</dbReference>
<dbReference type="GO" id="GO:0042632">
    <property type="term" value="P:cholesterol homeostasis"/>
    <property type="evidence" value="ECO:0007669"/>
    <property type="project" value="Ensembl"/>
</dbReference>
<dbReference type="GO" id="GO:0070508">
    <property type="term" value="P:cholesterol import"/>
    <property type="evidence" value="ECO:0007669"/>
    <property type="project" value="Ensembl"/>
</dbReference>
<dbReference type="GO" id="GO:0001935">
    <property type="term" value="P:endothelial cell proliferation"/>
    <property type="evidence" value="ECO:0007669"/>
    <property type="project" value="Ensembl"/>
</dbReference>
<dbReference type="GO" id="GO:0007186">
    <property type="term" value="P:G protein-coupled receptor signaling pathway"/>
    <property type="evidence" value="ECO:0007669"/>
    <property type="project" value="Ensembl"/>
</dbReference>
<dbReference type="GO" id="GO:0008211">
    <property type="term" value="P:glucocorticoid metabolic process"/>
    <property type="evidence" value="ECO:0007669"/>
    <property type="project" value="Ensembl"/>
</dbReference>
<dbReference type="GO" id="GO:0034380">
    <property type="term" value="P:high-density lipoprotein particle assembly"/>
    <property type="evidence" value="ECO:0007669"/>
    <property type="project" value="Ensembl"/>
</dbReference>
<dbReference type="GO" id="GO:0034375">
    <property type="term" value="P:high-density lipoprotein particle remodeling"/>
    <property type="evidence" value="ECO:0007669"/>
    <property type="project" value="Ensembl"/>
</dbReference>
<dbReference type="GO" id="GO:0007229">
    <property type="term" value="P:integrin-mediated signaling pathway"/>
    <property type="evidence" value="ECO:0007669"/>
    <property type="project" value="Ensembl"/>
</dbReference>
<dbReference type="GO" id="GO:0019915">
    <property type="term" value="P:lipid storage"/>
    <property type="evidence" value="ECO:0007669"/>
    <property type="project" value="Ensembl"/>
</dbReference>
<dbReference type="GO" id="GO:0042158">
    <property type="term" value="P:lipoprotein biosynthetic process"/>
    <property type="evidence" value="ECO:0007669"/>
    <property type="project" value="Ensembl"/>
</dbReference>
<dbReference type="GO" id="GO:0060354">
    <property type="term" value="P:negative regulation of cell adhesion molecule production"/>
    <property type="evidence" value="ECO:0007669"/>
    <property type="project" value="Ensembl"/>
</dbReference>
<dbReference type="GO" id="GO:0002719">
    <property type="term" value="P:negative regulation of cytokine production involved in immune response"/>
    <property type="evidence" value="ECO:0007669"/>
    <property type="project" value="Ensembl"/>
</dbReference>
<dbReference type="GO" id="GO:0034115">
    <property type="term" value="P:negative regulation of heterotypic cell-cell adhesion"/>
    <property type="evidence" value="ECO:0007669"/>
    <property type="project" value="Ensembl"/>
</dbReference>
<dbReference type="GO" id="GO:0050728">
    <property type="term" value="P:negative regulation of inflammatory response"/>
    <property type="evidence" value="ECO:0007669"/>
    <property type="project" value="Ensembl"/>
</dbReference>
<dbReference type="GO" id="GO:0032691">
    <property type="term" value="P:negative regulation of interleukin-1 beta production"/>
    <property type="evidence" value="ECO:0007669"/>
    <property type="project" value="Ensembl"/>
</dbReference>
<dbReference type="GO" id="GO:0010804">
    <property type="term" value="P:negative regulation of tumor necrosis factor-mediated signaling pathway"/>
    <property type="evidence" value="ECO:0007669"/>
    <property type="project" value="Ensembl"/>
</dbReference>
<dbReference type="GO" id="GO:0010903">
    <property type="term" value="P:negative regulation of very-low-density lipoprotein particle remodeling"/>
    <property type="evidence" value="ECO:0007669"/>
    <property type="project" value="Ensembl"/>
</dbReference>
<dbReference type="GO" id="GO:0006656">
    <property type="term" value="P:phosphatidylcholine biosynthetic process"/>
    <property type="evidence" value="ECO:0007669"/>
    <property type="project" value="Ensembl"/>
</dbReference>
<dbReference type="GO" id="GO:0033700">
    <property type="term" value="P:phospholipid efflux"/>
    <property type="evidence" value="ECO:0007669"/>
    <property type="project" value="Ensembl"/>
</dbReference>
<dbReference type="GO" id="GO:0055091">
    <property type="term" value="P:phospholipid homeostasis"/>
    <property type="evidence" value="ECO:0007669"/>
    <property type="project" value="Ensembl"/>
</dbReference>
<dbReference type="GO" id="GO:0010875">
    <property type="term" value="P:positive regulation of cholesterol efflux"/>
    <property type="evidence" value="ECO:0007669"/>
    <property type="project" value="Ensembl"/>
</dbReference>
<dbReference type="GO" id="GO:0090205">
    <property type="term" value="P:positive regulation of cholesterol metabolic process"/>
    <property type="evidence" value="ECO:0007669"/>
    <property type="project" value="Ensembl"/>
</dbReference>
<dbReference type="GO" id="GO:0050766">
    <property type="term" value="P:positive regulation of phagocytosis"/>
    <property type="evidence" value="ECO:0007669"/>
    <property type="project" value="Ensembl"/>
</dbReference>
<dbReference type="GO" id="GO:1902995">
    <property type="term" value="P:positive regulation of phospholipid efflux"/>
    <property type="evidence" value="ECO:0007669"/>
    <property type="project" value="Ensembl"/>
</dbReference>
<dbReference type="GO" id="GO:0035025">
    <property type="term" value="P:positive regulation of Rho protein signal transduction"/>
    <property type="evidence" value="ECO:0007669"/>
    <property type="project" value="Ensembl"/>
</dbReference>
<dbReference type="GO" id="GO:0051496">
    <property type="term" value="P:positive regulation of stress fiber assembly"/>
    <property type="evidence" value="ECO:0007669"/>
    <property type="project" value="Ensembl"/>
</dbReference>
<dbReference type="GO" id="GO:1900026">
    <property type="term" value="P:positive regulation of substrate adhesion-dependent cell spreading"/>
    <property type="evidence" value="ECO:0007669"/>
    <property type="project" value="Ensembl"/>
</dbReference>
<dbReference type="GO" id="GO:0050821">
    <property type="term" value="P:protein stabilization"/>
    <property type="evidence" value="ECO:0007669"/>
    <property type="project" value="Ensembl"/>
</dbReference>
<dbReference type="GO" id="GO:0032489">
    <property type="term" value="P:regulation of Cdc42 protein signal transduction"/>
    <property type="evidence" value="ECO:0007669"/>
    <property type="project" value="Ensembl"/>
</dbReference>
<dbReference type="GO" id="GO:0030300">
    <property type="term" value="P:regulation of intestinal cholesterol absorption"/>
    <property type="evidence" value="ECO:0007669"/>
    <property type="project" value="Ensembl"/>
</dbReference>
<dbReference type="GO" id="GO:0043691">
    <property type="term" value="P:reverse cholesterol transport"/>
    <property type="evidence" value="ECO:0007669"/>
    <property type="project" value="Ensembl"/>
</dbReference>
<dbReference type="GO" id="GO:0070328">
    <property type="term" value="P:triglyceride homeostasis"/>
    <property type="evidence" value="ECO:0007669"/>
    <property type="project" value="Ensembl"/>
</dbReference>
<dbReference type="GO" id="GO:0051180">
    <property type="term" value="P:vitamin transport"/>
    <property type="evidence" value="ECO:0007669"/>
    <property type="project" value="Ensembl"/>
</dbReference>
<dbReference type="FunFam" id="1.20.120.20:FF:000001">
    <property type="entry name" value="Apolipoprotein A-I"/>
    <property type="match status" value="1"/>
</dbReference>
<dbReference type="FunFam" id="1.20.5.20:FF:000001">
    <property type="entry name" value="apolipoprotein A-I"/>
    <property type="match status" value="1"/>
</dbReference>
<dbReference type="Gene3D" id="1.20.5.20">
    <property type="match status" value="1"/>
</dbReference>
<dbReference type="Gene3D" id="6.10.140.380">
    <property type="match status" value="1"/>
</dbReference>
<dbReference type="Gene3D" id="1.20.120.20">
    <property type="entry name" value="Apolipoprotein"/>
    <property type="match status" value="1"/>
</dbReference>
<dbReference type="InterPro" id="IPR000074">
    <property type="entry name" value="ApoA_E"/>
</dbReference>
<dbReference type="InterPro" id="IPR050163">
    <property type="entry name" value="Apolipoprotein_A1/A4/E"/>
</dbReference>
<dbReference type="PANTHER" id="PTHR18976">
    <property type="entry name" value="APOLIPOPROTEIN"/>
    <property type="match status" value="1"/>
</dbReference>
<dbReference type="PANTHER" id="PTHR18976:SF11">
    <property type="entry name" value="APOLIPOPROTEIN A-I"/>
    <property type="match status" value="1"/>
</dbReference>
<dbReference type="Pfam" id="PF01442">
    <property type="entry name" value="Apolipoprotein"/>
    <property type="match status" value="1"/>
</dbReference>
<dbReference type="SUPFAM" id="SSF58113">
    <property type="entry name" value="Apolipoprotein A-I"/>
    <property type="match status" value="1"/>
</dbReference>
<reference key="1">
    <citation type="submission" date="2017-04" db="EMBL/GenBank/DDBJ databases">
        <authorList>
            <person name="Clarke L."/>
            <person name="Flicek P."/>
            <person name="Streeter I."/>
            <person name="Bradley H."/>
            <person name="Richardson D."/>
        </authorList>
    </citation>
    <scope>NUCLEOTIDE SEQUENCE [LARGE SCALE GENOMIC DNA]</scope>
    <source>
        <tissue>Tail</tissue>
    </source>
</reference>
<reference key="2">
    <citation type="unpublished observations" date="2020-03">
        <authorList>
            <person name="Puppione D.L."/>
        </authorList>
    </citation>
    <scope>IDENTIFICATION</scope>
</reference>
<comment type="function">
    <text evidence="3">Participates in the reverse transport of cholesterol from tissues to the liver for excretion by promoting cholesterol efflux from tissues and by acting as a cofactor for the lecithin cholesterol acyltransferase (LCAT). As part of the SPAP complex, activates spermatozoa motility.</text>
</comment>
<comment type="subunit">
    <text evidence="2 3 5">Homodimer (By similarity). Interacts with APOA1BP and CLU. Component of a sperm activating protein complex (SPAP), consisting of APOA1, an immunoglobulin heavy chain, an immunoglobulin light chain and albumin. Interacts with NDRG1. Interacts with SCGB3A2 (By similarity). Interacts with NAXE and YJEFN3 (By similarity).</text>
</comment>
<comment type="subcellular location">
    <subcellularLocation>
        <location evidence="3">Secreted</location>
    </subcellularLocation>
</comment>
<comment type="PTM">
    <text evidence="4">Glycosylated.</text>
</comment>
<comment type="PTM">
    <text evidence="4">Palmitoylated.</text>
</comment>
<comment type="PTM">
    <text evidence="1">Phosphorylation sites are present in the extracellular medium.</text>
</comment>
<comment type="similarity">
    <text evidence="7">Belongs to the apolipoprotein A1/A4/E family.</text>
</comment>
<evidence type="ECO:0000250" key="1"/>
<evidence type="ECO:0000250" key="2">
    <source>
        <dbReference type="UniProtKB" id="G5BQH5"/>
    </source>
</evidence>
<evidence type="ECO:0000250" key="3">
    <source>
        <dbReference type="UniProtKB" id="P02647"/>
    </source>
</evidence>
<evidence type="ECO:0000250" key="4">
    <source>
        <dbReference type="UniProtKB" id="P02648"/>
    </source>
</evidence>
<evidence type="ECO:0000250" key="5">
    <source>
        <dbReference type="UniProtKB" id="P04639"/>
    </source>
</evidence>
<evidence type="ECO:0000255" key="6"/>
<evidence type="ECO:0000305" key="7"/>
<gene>
    <name type="primary">Apoa1</name>
</gene>
<proteinExistence type="inferred from homology"/>
<name>APOA1_MUSPA</name>
<feature type="signal peptide" evidence="6">
    <location>
        <begin position="1"/>
        <end position="18"/>
    </location>
</feature>
<feature type="chain" id="PRO_0000450150" description="Proapolipoprotein A-I">
    <location>
        <begin position="19"/>
        <end position="264"/>
    </location>
</feature>
<feature type="chain" id="PRO_0000450151" description="Apolipoprotein A-I">
    <location>
        <begin position="25"/>
        <end position="264"/>
    </location>
</feature>
<feature type="chain" id="PRO_0000450152" description="Truncated apolipoprotein A-I" evidence="3">
    <location>
        <begin position="25"/>
        <end position="263"/>
    </location>
</feature>
<feature type="repeat" description="1">
    <location>
        <begin position="67"/>
        <end position="88"/>
    </location>
</feature>
<feature type="repeat" description="2">
    <location>
        <begin position="89"/>
        <end position="110"/>
    </location>
</feature>
<feature type="repeat" description="3; half-length">
    <location>
        <begin position="111"/>
        <end position="121"/>
    </location>
</feature>
<feature type="repeat" description="4">
    <location>
        <begin position="122"/>
        <end position="143"/>
    </location>
</feature>
<feature type="repeat" description="5">
    <location>
        <begin position="144"/>
        <end position="165"/>
    </location>
</feature>
<feature type="repeat" description="6">
    <location>
        <begin position="166"/>
        <end position="187"/>
    </location>
</feature>
<feature type="repeat" description="7; truncated">
    <location>
        <begin position="188"/>
        <end position="207"/>
    </location>
</feature>
<feature type="repeat" description="8">
    <location>
        <begin position="208"/>
        <end position="229"/>
    </location>
</feature>
<feature type="repeat" description="9; half-length">
    <location>
        <begin position="230"/>
        <end position="240"/>
    </location>
</feature>
<feature type="repeat" description="10">
    <location>
        <begin position="241"/>
        <end position="264"/>
    </location>
</feature>
<feature type="region of interest" description="10 X approximate tandem repeats">
    <location>
        <begin position="67"/>
        <end position="264"/>
    </location>
</feature>
<feature type="modified residue" description="Methionine sulfoxide" evidence="3">
    <location>
        <position position="109"/>
    </location>
</feature>
<sequence>MKAVVLAVALVFLTGSQAWHVWQQDEPQSRWDKVKDFATVYVDAVKDSGRDYVSQFESSSLGKQLNLNLLENWDTLGTTVGQLQERLGPLTRDFWDNLEKETDWLRQEMNKDLEEVKQNVQPYLDEFQKKWNEDVELYRQRVAPLGAELHESARQKLQELQGKLSPVAEEFRDRMRTHVDALRTQLAPHSDKLRESLAQRLAELKSNPTLNEYHTRAKTHLNTFGEKARPALEDLRHTLIPILDTLKTKVKSVIDKARETLTAQ</sequence>
<protein>
    <recommendedName>
        <fullName>Apolipoprotein A-I</fullName>
        <shortName>Apo-AI</shortName>
        <shortName>ApoA-I</shortName>
    </recommendedName>
    <alternativeName>
        <fullName>Apolipoprotein A1</fullName>
    </alternativeName>
    <component>
        <recommendedName>
            <fullName>Proapolipoprotein A-I</fullName>
            <shortName>ProapoA-I</shortName>
        </recommendedName>
    </component>
    <component>
        <recommendedName>
            <fullName>Truncated apolipoprotein A-I</fullName>
        </recommendedName>
    </component>
</protein>
<accession>P0DTV0</accession>